<comment type="function">
    <text evidence="1">Has been proposed to act as a receptor for neuronostatin, a peptide derived from the somatostatin/SST precursor (By similarity). Involved in blood sugar regulation through the induction of glucagon in response to low glucose (By similarity).</text>
</comment>
<comment type="subcellular location">
    <subcellularLocation>
        <location evidence="5">Cell membrane</location>
        <topology evidence="4">Multi-pass membrane protein</topology>
    </subcellularLocation>
    <subcellularLocation>
        <location evidence="2">Golgi apparatus</location>
        <location evidence="2">trans-Golgi network membrane</location>
        <topology evidence="3">Multi-pass membrane protein</topology>
    </subcellularLocation>
</comment>
<comment type="PTM">
    <text evidence="2">Cleaved by FURIN to yield two fragments that remain associated via a disulfide bond.</text>
</comment>
<comment type="similarity">
    <text evidence="4">Belongs to the LU7TM family.</text>
</comment>
<proteinExistence type="evidence at protein level"/>
<evidence type="ECO:0000250" key="1">
    <source>
        <dbReference type="UniProtKB" id="D3ZWZ9"/>
    </source>
</evidence>
<evidence type="ECO:0000250" key="2">
    <source>
        <dbReference type="UniProtKB" id="Q5VW38"/>
    </source>
</evidence>
<evidence type="ECO:0000255" key="3"/>
<evidence type="ECO:0000305" key="4"/>
<evidence type="ECO:0000305" key="5">
    <source>
    </source>
</evidence>
<evidence type="ECO:0007744" key="6">
    <source>
    </source>
</evidence>
<keyword id="KW-1003">Cell membrane</keyword>
<keyword id="KW-1015">Disulfide bond</keyword>
<keyword id="KW-0325">Glycoprotein</keyword>
<keyword id="KW-0333">Golgi apparatus</keyword>
<keyword id="KW-0472">Membrane</keyword>
<keyword id="KW-0597">Phosphoprotein</keyword>
<keyword id="KW-1185">Reference proteome</keyword>
<keyword id="KW-0732">Signal</keyword>
<keyword id="KW-0812">Transmembrane</keyword>
<keyword id="KW-1133">Transmembrane helix</keyword>
<organism>
    <name type="scientific">Mus musculus</name>
    <name type="common">Mouse</name>
    <dbReference type="NCBI Taxonomy" id="10090"/>
    <lineage>
        <taxon>Eukaryota</taxon>
        <taxon>Metazoa</taxon>
        <taxon>Chordata</taxon>
        <taxon>Craniata</taxon>
        <taxon>Vertebrata</taxon>
        <taxon>Euteleostomi</taxon>
        <taxon>Mammalia</taxon>
        <taxon>Eutheria</taxon>
        <taxon>Euarchontoglires</taxon>
        <taxon>Glires</taxon>
        <taxon>Rodentia</taxon>
        <taxon>Myomorpha</taxon>
        <taxon>Muroidea</taxon>
        <taxon>Muridae</taxon>
        <taxon>Murinae</taxon>
        <taxon>Mus</taxon>
        <taxon>Mus</taxon>
    </lineage>
</organism>
<dbReference type="EMBL" id="AK030433">
    <property type="protein sequence ID" value="BAC26961.1"/>
    <property type="molecule type" value="mRNA"/>
</dbReference>
<dbReference type="EMBL" id="AK034815">
    <property type="protein sequence ID" value="BAC28840.1"/>
    <property type="molecule type" value="mRNA"/>
</dbReference>
<dbReference type="EMBL" id="AK082237">
    <property type="protein sequence ID" value="BAC38445.1"/>
    <property type="molecule type" value="mRNA"/>
</dbReference>
<dbReference type="EMBL" id="AK088544">
    <property type="protein sequence ID" value="BAC40414.1"/>
    <property type="molecule type" value="mRNA"/>
</dbReference>
<dbReference type="EMBL" id="BC092231">
    <property type="protein sequence ID" value="AAH92231.1"/>
    <property type="molecule type" value="mRNA"/>
</dbReference>
<dbReference type="EMBL" id="AK129407">
    <property type="protein sequence ID" value="BAC98217.1"/>
    <property type="molecule type" value="mRNA"/>
</dbReference>
<dbReference type="CCDS" id="CCDS15895.1"/>
<dbReference type="RefSeq" id="NP_848875.2">
    <property type="nucleotide sequence ID" value="NM_178760.4"/>
</dbReference>
<dbReference type="BioGRID" id="234940">
    <property type="interactions" value="2"/>
</dbReference>
<dbReference type="FunCoup" id="Q8BUV8">
    <property type="interactions" value="4751"/>
</dbReference>
<dbReference type="STRING" id="10090.ENSMUSP00000056739"/>
<dbReference type="GlyCosmos" id="Q8BUV8">
    <property type="glycosylation" value="2 sites, No reported glycans"/>
</dbReference>
<dbReference type="GlyGen" id="Q8BUV8">
    <property type="glycosylation" value="2 sites, 1 N-linked glycan (1 site)"/>
</dbReference>
<dbReference type="iPTMnet" id="Q8BUV8"/>
<dbReference type="PhosphoSitePlus" id="Q8BUV8"/>
<dbReference type="jPOST" id="Q8BUV8"/>
<dbReference type="PaxDb" id="10090-ENSMUSP00000056739"/>
<dbReference type="ProteomicsDB" id="271423"/>
<dbReference type="Pumba" id="Q8BUV8"/>
<dbReference type="Antibodypedia" id="31467">
    <property type="antibodies" value="142 antibodies from 27 providers"/>
</dbReference>
<dbReference type="Ensembl" id="ENSMUST00000056433.7">
    <property type="protein sequence ID" value="ENSMUSP00000056739.6"/>
    <property type="gene ID" value="ENSMUSG00000000194.14"/>
</dbReference>
<dbReference type="GeneID" id="277463"/>
<dbReference type="KEGG" id="mmu:277463"/>
<dbReference type="UCSC" id="uc008jdp.2">
    <property type="organism name" value="mouse"/>
</dbReference>
<dbReference type="AGR" id="MGI:2139054"/>
<dbReference type="CTD" id="57720"/>
<dbReference type="MGI" id="MGI:2139054">
    <property type="gene designation" value="Gpr107"/>
</dbReference>
<dbReference type="VEuPathDB" id="HostDB:ENSMUSG00000000194"/>
<dbReference type="eggNOG" id="KOG2569">
    <property type="taxonomic scope" value="Eukaryota"/>
</dbReference>
<dbReference type="GeneTree" id="ENSGT00940000160451"/>
<dbReference type="HOGENOM" id="CLU_020277_4_1_1"/>
<dbReference type="InParanoid" id="Q8BUV8"/>
<dbReference type="OMA" id="GIHEEAW"/>
<dbReference type="OrthoDB" id="29657at2759"/>
<dbReference type="PhylomeDB" id="Q8BUV8"/>
<dbReference type="TreeFam" id="TF314804"/>
<dbReference type="BioGRID-ORCS" id="277463">
    <property type="hits" value="2 hits in 77 CRISPR screens"/>
</dbReference>
<dbReference type="PRO" id="PR:Q8BUV8"/>
<dbReference type="Proteomes" id="UP000000589">
    <property type="component" value="Chromosome 2"/>
</dbReference>
<dbReference type="RNAct" id="Q8BUV8">
    <property type="molecule type" value="protein"/>
</dbReference>
<dbReference type="Bgee" id="ENSMUSG00000000194">
    <property type="expression patterns" value="Expressed in spermatocyte and 227 other cell types or tissues"/>
</dbReference>
<dbReference type="ExpressionAtlas" id="Q8BUV8">
    <property type="expression patterns" value="baseline and differential"/>
</dbReference>
<dbReference type="GO" id="GO:0030136">
    <property type="term" value="C:clathrin-coated vesicle"/>
    <property type="evidence" value="ECO:0000314"/>
    <property type="project" value="MGI"/>
</dbReference>
<dbReference type="GO" id="GO:0005769">
    <property type="term" value="C:early endosome"/>
    <property type="evidence" value="ECO:0000314"/>
    <property type="project" value="MGI"/>
</dbReference>
<dbReference type="GO" id="GO:0005794">
    <property type="term" value="C:Golgi apparatus"/>
    <property type="evidence" value="ECO:0007669"/>
    <property type="project" value="UniProtKB-SubCell"/>
</dbReference>
<dbReference type="GO" id="GO:0005654">
    <property type="term" value="C:nucleoplasm"/>
    <property type="evidence" value="ECO:0007669"/>
    <property type="project" value="Ensembl"/>
</dbReference>
<dbReference type="GO" id="GO:0005886">
    <property type="term" value="C:plasma membrane"/>
    <property type="evidence" value="ECO:0007669"/>
    <property type="project" value="UniProtKB-SubCell"/>
</dbReference>
<dbReference type="GO" id="GO:0032050">
    <property type="term" value="F:clathrin heavy chain binding"/>
    <property type="evidence" value="ECO:0000314"/>
    <property type="project" value="MGI"/>
</dbReference>
<dbReference type="GO" id="GO:0072583">
    <property type="term" value="P:clathrin-dependent endocytosis"/>
    <property type="evidence" value="ECO:0000315"/>
    <property type="project" value="MGI"/>
</dbReference>
<dbReference type="InterPro" id="IPR054103">
    <property type="entry name" value="CAND6-7_N"/>
</dbReference>
<dbReference type="InterPro" id="IPR053937">
    <property type="entry name" value="GOST_TM"/>
</dbReference>
<dbReference type="InterPro" id="IPR009637">
    <property type="entry name" value="GPR107/GPR108-like"/>
</dbReference>
<dbReference type="PANTHER" id="PTHR21229">
    <property type="entry name" value="LUNG SEVEN TRANSMEMBRANE RECEPTOR"/>
    <property type="match status" value="1"/>
</dbReference>
<dbReference type="PANTHER" id="PTHR21229:SF12">
    <property type="entry name" value="PROTEIN GPR107"/>
    <property type="match status" value="1"/>
</dbReference>
<dbReference type="Pfam" id="PF21904">
    <property type="entry name" value="CAND6-7_N"/>
    <property type="match status" value="1"/>
</dbReference>
<dbReference type="Pfam" id="PF06814">
    <property type="entry name" value="GOST_TM"/>
    <property type="match status" value="1"/>
</dbReference>
<sequence length="551" mass="62056">MAVPVPLGRFGSFCLRLLRLLALLELLVHPVLGRVHHLALKDDVRHKVHLNTFGFFKDGYMVVNVSSLSVNEPEGATDKDAEIGFSLDRTKNDGFSSYLDEDVNYCILKKKSMSSVTLVILDISGSIVKVRSPPEAGKQLPEIVFSKDEKILSQSQEPAVSSNPKDSEARRTLDGFKAGRSTVDSKAITERSFSIHKNDGVVSFQFFFNISTDDQEGLYSLYFHKCSGNNVKPGEQASFSLNIAITEKNPNSYLSAGEIPLPKLYVSMALFFFLSGTIWIHILRKRRNDVFKIHWLMAALPFTKSLSLVFHAIDYHYISSQGFPIEGWAVVYYITHLLKGALLFITIALIGTGWAFIKHILSDKDKKIFMIVIPLQVLANVAYIIIESTEEGTTEYGLWKDSLFLVDLLCCGAILFPVVWSIRHLQEASATDGKAAINLAKLRLFRHYYVLIVCYIYFTRIIAFLLKFAVPFQWKWLYQLLDETATLVFFVLTGYKFRPASDNPYLQLSQEDDDLEMESVVTTSGVMENMKKVKKVSNGAVEPQGSWEGTA</sequence>
<gene>
    <name type="primary">Gpr107</name>
    <name type="synonym">Kiaa1624</name>
</gene>
<name>GP107_MOUSE</name>
<accession>Q8BUV8</accession>
<accession>Q6ZPL4</accession>
<accession>Q8BM58</accession>
<accession>Q8BMN6</accession>
<accession>Q8BTW1</accession>
<protein>
    <recommendedName>
        <fullName>Protein GPR107</fullName>
    </recommendedName>
</protein>
<feature type="signal peptide" evidence="3">
    <location>
        <begin position="1"/>
        <end position="33"/>
    </location>
</feature>
<feature type="chain" id="PRO_0000021341" description="Protein GPR107">
    <location>
        <begin position="34"/>
        <end position="551"/>
    </location>
</feature>
<feature type="topological domain" description="Extracellular" evidence="3">
    <location>
        <begin position="40"/>
        <end position="262"/>
    </location>
</feature>
<feature type="transmembrane region" description="Helical; Name=1" evidence="3">
    <location>
        <begin position="263"/>
        <end position="283"/>
    </location>
</feature>
<feature type="topological domain" description="Cytoplasmic" evidence="3">
    <location>
        <begin position="284"/>
        <end position="292"/>
    </location>
</feature>
<feature type="transmembrane region" description="Helical; Name=2" evidence="3">
    <location>
        <begin position="293"/>
        <end position="313"/>
    </location>
</feature>
<feature type="topological domain" description="Extracellular" evidence="3">
    <location>
        <begin position="314"/>
        <end position="336"/>
    </location>
</feature>
<feature type="transmembrane region" description="Helical; Name=3" evidence="3">
    <location>
        <begin position="337"/>
        <end position="357"/>
    </location>
</feature>
<feature type="topological domain" description="Cytoplasmic" evidence="3">
    <location>
        <begin position="358"/>
        <end position="367"/>
    </location>
</feature>
<feature type="transmembrane region" description="Helical; Name=4" evidence="3">
    <location>
        <begin position="368"/>
        <end position="388"/>
    </location>
</feature>
<feature type="topological domain" description="Extracellular" evidence="3">
    <location>
        <begin position="389"/>
        <end position="401"/>
    </location>
</feature>
<feature type="transmembrane region" description="Helical; Name=5" evidence="3">
    <location>
        <begin position="402"/>
        <end position="422"/>
    </location>
</feature>
<feature type="topological domain" description="Cytoplasmic" evidence="3">
    <location>
        <begin position="423"/>
        <end position="449"/>
    </location>
</feature>
<feature type="transmembrane region" description="Helical; Name=6" evidence="3">
    <location>
        <begin position="450"/>
        <end position="470"/>
    </location>
</feature>
<feature type="topological domain" description="Extracellular" evidence="3">
    <location>
        <begin position="471"/>
        <end position="475"/>
    </location>
</feature>
<feature type="transmembrane region" description="Helical; Name=7" evidence="3">
    <location>
        <begin position="476"/>
        <end position="495"/>
    </location>
</feature>
<feature type="topological domain" description="Cytoplasmic" evidence="3">
    <location>
        <begin position="496"/>
        <end position="551"/>
    </location>
</feature>
<feature type="modified residue" description="Phosphoserine" evidence="6">
    <location>
        <position position="537"/>
    </location>
</feature>
<feature type="glycosylation site" description="N-linked (GlcNAc...) asparagine" evidence="3">
    <location>
        <position position="64"/>
    </location>
</feature>
<feature type="glycosylation site" description="N-linked (GlcNAc...) asparagine" evidence="3">
    <location>
        <position position="209"/>
    </location>
</feature>
<feature type="disulfide bond" evidence="2">
    <location>
        <begin position="106"/>
        <end position="226"/>
    </location>
</feature>
<feature type="sequence conflict" description="In Ref. 1; BAC38445." evidence="4" ref="1">
    <original>I</original>
    <variation>L</variation>
    <location>
        <position position="127"/>
    </location>
</feature>
<feature type="sequence conflict" description="In Ref. 1; BAC40414 and 3; BAC98217." evidence="4" ref="1 3">
    <original>Q</original>
    <variation>R</variation>
    <location>
        <position position="154"/>
    </location>
</feature>
<feature type="sequence conflict" description="In Ref. 1; BAC28840." evidence="4" ref="1">
    <original>K</original>
    <variation>R</variation>
    <location>
        <position position="532"/>
    </location>
</feature>
<reference key="1">
    <citation type="journal article" date="2005" name="Science">
        <title>The transcriptional landscape of the mammalian genome.</title>
        <authorList>
            <person name="Carninci P."/>
            <person name="Kasukawa T."/>
            <person name="Katayama S."/>
            <person name="Gough J."/>
            <person name="Frith M.C."/>
            <person name="Maeda N."/>
            <person name="Oyama R."/>
            <person name="Ravasi T."/>
            <person name="Lenhard B."/>
            <person name="Wells C."/>
            <person name="Kodzius R."/>
            <person name="Shimokawa K."/>
            <person name="Bajic V.B."/>
            <person name="Brenner S.E."/>
            <person name="Batalov S."/>
            <person name="Forrest A.R."/>
            <person name="Zavolan M."/>
            <person name="Davis M.J."/>
            <person name="Wilming L.G."/>
            <person name="Aidinis V."/>
            <person name="Allen J.E."/>
            <person name="Ambesi-Impiombato A."/>
            <person name="Apweiler R."/>
            <person name="Aturaliya R.N."/>
            <person name="Bailey T.L."/>
            <person name="Bansal M."/>
            <person name="Baxter L."/>
            <person name="Beisel K.W."/>
            <person name="Bersano T."/>
            <person name="Bono H."/>
            <person name="Chalk A.M."/>
            <person name="Chiu K.P."/>
            <person name="Choudhary V."/>
            <person name="Christoffels A."/>
            <person name="Clutterbuck D.R."/>
            <person name="Crowe M.L."/>
            <person name="Dalla E."/>
            <person name="Dalrymple B.P."/>
            <person name="de Bono B."/>
            <person name="Della Gatta G."/>
            <person name="di Bernardo D."/>
            <person name="Down T."/>
            <person name="Engstrom P."/>
            <person name="Fagiolini M."/>
            <person name="Faulkner G."/>
            <person name="Fletcher C.F."/>
            <person name="Fukushima T."/>
            <person name="Furuno M."/>
            <person name="Futaki S."/>
            <person name="Gariboldi M."/>
            <person name="Georgii-Hemming P."/>
            <person name="Gingeras T.R."/>
            <person name="Gojobori T."/>
            <person name="Green R.E."/>
            <person name="Gustincich S."/>
            <person name="Harbers M."/>
            <person name="Hayashi Y."/>
            <person name="Hensch T.K."/>
            <person name="Hirokawa N."/>
            <person name="Hill D."/>
            <person name="Huminiecki L."/>
            <person name="Iacono M."/>
            <person name="Ikeo K."/>
            <person name="Iwama A."/>
            <person name="Ishikawa T."/>
            <person name="Jakt M."/>
            <person name="Kanapin A."/>
            <person name="Katoh M."/>
            <person name="Kawasawa Y."/>
            <person name="Kelso J."/>
            <person name="Kitamura H."/>
            <person name="Kitano H."/>
            <person name="Kollias G."/>
            <person name="Krishnan S.P."/>
            <person name="Kruger A."/>
            <person name="Kummerfeld S.K."/>
            <person name="Kurochkin I.V."/>
            <person name="Lareau L.F."/>
            <person name="Lazarevic D."/>
            <person name="Lipovich L."/>
            <person name="Liu J."/>
            <person name="Liuni S."/>
            <person name="McWilliam S."/>
            <person name="Madan Babu M."/>
            <person name="Madera M."/>
            <person name="Marchionni L."/>
            <person name="Matsuda H."/>
            <person name="Matsuzawa S."/>
            <person name="Miki H."/>
            <person name="Mignone F."/>
            <person name="Miyake S."/>
            <person name="Morris K."/>
            <person name="Mottagui-Tabar S."/>
            <person name="Mulder N."/>
            <person name="Nakano N."/>
            <person name="Nakauchi H."/>
            <person name="Ng P."/>
            <person name="Nilsson R."/>
            <person name="Nishiguchi S."/>
            <person name="Nishikawa S."/>
            <person name="Nori F."/>
            <person name="Ohara O."/>
            <person name="Okazaki Y."/>
            <person name="Orlando V."/>
            <person name="Pang K.C."/>
            <person name="Pavan W.J."/>
            <person name="Pavesi G."/>
            <person name="Pesole G."/>
            <person name="Petrovsky N."/>
            <person name="Piazza S."/>
            <person name="Reed J."/>
            <person name="Reid J.F."/>
            <person name="Ring B.Z."/>
            <person name="Ringwald M."/>
            <person name="Rost B."/>
            <person name="Ruan Y."/>
            <person name="Salzberg S.L."/>
            <person name="Sandelin A."/>
            <person name="Schneider C."/>
            <person name="Schoenbach C."/>
            <person name="Sekiguchi K."/>
            <person name="Semple C.A."/>
            <person name="Seno S."/>
            <person name="Sessa L."/>
            <person name="Sheng Y."/>
            <person name="Shibata Y."/>
            <person name="Shimada H."/>
            <person name="Shimada K."/>
            <person name="Silva D."/>
            <person name="Sinclair B."/>
            <person name="Sperling S."/>
            <person name="Stupka E."/>
            <person name="Sugiura K."/>
            <person name="Sultana R."/>
            <person name="Takenaka Y."/>
            <person name="Taki K."/>
            <person name="Tammoja K."/>
            <person name="Tan S.L."/>
            <person name="Tang S."/>
            <person name="Taylor M.S."/>
            <person name="Tegner J."/>
            <person name="Teichmann S.A."/>
            <person name="Ueda H.R."/>
            <person name="van Nimwegen E."/>
            <person name="Verardo R."/>
            <person name="Wei C.L."/>
            <person name="Yagi K."/>
            <person name="Yamanishi H."/>
            <person name="Zabarovsky E."/>
            <person name="Zhu S."/>
            <person name="Zimmer A."/>
            <person name="Hide W."/>
            <person name="Bult C."/>
            <person name="Grimmond S.M."/>
            <person name="Teasdale R.D."/>
            <person name="Liu E.T."/>
            <person name="Brusic V."/>
            <person name="Quackenbush J."/>
            <person name="Wahlestedt C."/>
            <person name="Mattick J.S."/>
            <person name="Hume D.A."/>
            <person name="Kai C."/>
            <person name="Sasaki D."/>
            <person name="Tomaru Y."/>
            <person name="Fukuda S."/>
            <person name="Kanamori-Katayama M."/>
            <person name="Suzuki M."/>
            <person name="Aoki J."/>
            <person name="Arakawa T."/>
            <person name="Iida J."/>
            <person name="Imamura K."/>
            <person name="Itoh M."/>
            <person name="Kato T."/>
            <person name="Kawaji H."/>
            <person name="Kawagashira N."/>
            <person name="Kawashima T."/>
            <person name="Kojima M."/>
            <person name="Kondo S."/>
            <person name="Konno H."/>
            <person name="Nakano K."/>
            <person name="Ninomiya N."/>
            <person name="Nishio T."/>
            <person name="Okada M."/>
            <person name="Plessy C."/>
            <person name="Shibata K."/>
            <person name="Shiraki T."/>
            <person name="Suzuki S."/>
            <person name="Tagami M."/>
            <person name="Waki K."/>
            <person name="Watahiki A."/>
            <person name="Okamura-Oho Y."/>
            <person name="Suzuki H."/>
            <person name="Kawai J."/>
            <person name="Hayashizaki Y."/>
        </authorList>
    </citation>
    <scope>NUCLEOTIDE SEQUENCE [LARGE SCALE MRNA]</scope>
    <source>
        <strain>C57BL/6J</strain>
        <tissue>Cerebellum</tissue>
        <tissue>Embryoid bodies</tissue>
        <tissue>Pituitary</tissue>
        <tissue>Thymus</tissue>
    </source>
</reference>
<reference key="2">
    <citation type="journal article" date="2004" name="Genome Res.">
        <title>The status, quality, and expansion of the NIH full-length cDNA project: the Mammalian Gene Collection (MGC).</title>
        <authorList>
            <consortium name="The MGC Project Team"/>
        </authorList>
    </citation>
    <scope>NUCLEOTIDE SEQUENCE [LARGE SCALE MRNA]</scope>
    <source>
        <strain>C57BL/6J</strain>
        <tissue>Eye</tissue>
    </source>
</reference>
<reference key="3">
    <citation type="journal article" date="2003" name="DNA Res.">
        <title>Prediction of the coding sequences of mouse homologues of KIAA gene: III. The complete nucleotide sequences of 500 mouse KIAA-homologous cDNAs identified by screening of terminal sequences of cDNA clones randomly sampled from size-fractionated libraries.</title>
        <authorList>
            <person name="Okazaki N."/>
            <person name="Kikuno R."/>
            <person name="Ohara R."/>
            <person name="Inamoto S."/>
            <person name="Koseki H."/>
            <person name="Hiraoka S."/>
            <person name="Saga Y."/>
            <person name="Nagase T."/>
            <person name="Ohara O."/>
            <person name="Koga H."/>
        </authorList>
    </citation>
    <scope>NUCLEOTIDE SEQUENCE [LARGE SCALE MRNA] OF 22-551</scope>
    <source>
        <tissue>Embryonic tail</tissue>
    </source>
</reference>
<reference key="4">
    <citation type="journal article" date="2010" name="Cell">
        <title>A tissue-specific atlas of mouse protein phosphorylation and expression.</title>
        <authorList>
            <person name="Huttlin E.L."/>
            <person name="Jedrychowski M.P."/>
            <person name="Elias J.E."/>
            <person name="Goswami T."/>
            <person name="Rad R."/>
            <person name="Beausoleil S.A."/>
            <person name="Villen J."/>
            <person name="Haas W."/>
            <person name="Sowa M.E."/>
            <person name="Gygi S.P."/>
        </authorList>
    </citation>
    <scope>PHOSPHORYLATION [LARGE SCALE ANALYSIS] AT SER-537</scope>
    <scope>IDENTIFICATION BY MASS SPECTROMETRY [LARGE SCALE ANALYSIS]</scope>
    <source>
        <tissue>Brain</tissue>
        <tissue>Brown adipose tissue</tissue>
        <tissue>Kidney</tissue>
        <tissue>Liver</tissue>
        <tissue>Lung</tissue>
        <tissue>Pancreas</tissue>
        <tissue>Spleen</tissue>
        <tissue>Testis</tissue>
    </source>
</reference>
<reference key="5">
    <citation type="journal article" date="2016" name="Am. J. Physiol.">
        <title>Neuronostatin acts via GPR107 to increase cAMP-independent PKA phosphorylation and proglucagon mRNA accumulation in pancreatic alpha-cells.</title>
        <authorList>
            <person name="Elrick M.M."/>
            <person name="Samson W.K."/>
            <person name="Corbett J.A."/>
            <person name="Salvatori A.S."/>
            <person name="Stein L.M."/>
            <person name="Kolar G.R."/>
            <person name="Naatz A."/>
            <person name="Yosten G.L."/>
        </authorList>
    </citation>
    <scope>SUBCELLULAR LOCATION</scope>
</reference>